<sequence length="542" mass="60914">MLGHRLLPSLDFPAVSEGYKPEHDMSPNKDASSLNSSAAGLVCLPPVSEELQLVWTQAIQTSELDGNEHLLQAFSYFPYPSLADIALLCLRHGLQMEKVKTWFMAQRLRCGISWSSEEIEETRARVVYHRDQLLFKSLLSFTQQSVRPPQERPPVLRPEQVALGLSPLAPSEQPTHMKGLKVEPEEPSQVSQLPLNHQNAKEPLMMGSRTFSHQSDCQDLQISGLSKEQAGRGPDQSCGKTASWNHFTAVHQPDKPASVSLLDNSCKEESEPSGIPPSSSTSSPSFQALANGTTATPKPLQPLGCISQSLSPSKKALSPQVEPLWPQRLWNNSEPNSAGPTEYLSPDMQHQRKTKRKTKEQLAILKSFFLQCQWARREDYHKLEQITGLPRPEIIQWFGDTRYALKHGQLKWFRDNAVLGTPSFQDPAIPTPSTRSLKEWAKTPPLPAPPPPPDIRPLEKYWAAHQQLQEADILKLSQASRLSTQQVLDWFDSRLPKPAEVVVCLDEEDEEDEEDELPEDGEEEEEEEEDDDDGDDDVIIWD</sequence>
<keyword id="KW-0025">Alternative splicing</keyword>
<keyword id="KW-0238">DNA-binding</keyword>
<keyword id="KW-0371">Homeobox</keyword>
<keyword id="KW-1017">Isopeptide bond</keyword>
<keyword id="KW-0539">Nucleus</keyword>
<keyword id="KW-0597">Phosphoprotein</keyword>
<keyword id="KW-1185">Reference proteome</keyword>
<keyword id="KW-0677">Repeat</keyword>
<keyword id="KW-0804">Transcription</keyword>
<keyword id="KW-0805">Transcription regulation</keyword>
<keyword id="KW-0832">Ubl conjugation</keyword>
<name>HOMEZ_MOUSE</name>
<protein>
    <recommendedName>
        <fullName>Homeobox and leucine zipper protein Homez</fullName>
    </recommendedName>
    <alternativeName>
        <fullName>Homeodomain leucine zipper-containing factor</fullName>
    </alternativeName>
</protein>
<feature type="chain" id="PRO_0000049136" description="Homeobox and leucine zipper protein Homez">
    <location>
        <begin position="1"/>
        <end position="542"/>
    </location>
</feature>
<feature type="DNA-binding region" description="Homeobox 1" evidence="4">
    <location>
        <begin position="55"/>
        <end position="114"/>
    </location>
</feature>
<feature type="DNA-binding region" description="Homeobox 2" evidence="4">
    <location>
        <begin position="349"/>
        <end position="409"/>
    </location>
</feature>
<feature type="DNA-binding region" description="Homeobox 3" evidence="4">
    <location>
        <begin position="443"/>
        <end position="502"/>
    </location>
</feature>
<feature type="region of interest" description="Disordered" evidence="5">
    <location>
        <begin position="165"/>
        <end position="193"/>
    </location>
</feature>
<feature type="region of interest" description="Disordered" evidence="5">
    <location>
        <begin position="250"/>
        <end position="307"/>
    </location>
</feature>
<feature type="region of interest" description="Disordered" evidence="5">
    <location>
        <begin position="424"/>
        <end position="454"/>
    </location>
</feature>
<feature type="region of interest" description="Disordered" evidence="5">
    <location>
        <begin position="501"/>
        <end position="542"/>
    </location>
</feature>
<feature type="short sequence motif" description="Nuclear localization signal" evidence="3">
    <location>
        <begin position="352"/>
        <end position="357"/>
    </location>
</feature>
<feature type="compositionally biased region" description="Low complexity" evidence="5">
    <location>
        <begin position="272"/>
        <end position="285"/>
    </location>
</feature>
<feature type="compositionally biased region" description="Polar residues" evidence="5">
    <location>
        <begin position="286"/>
        <end position="296"/>
    </location>
</feature>
<feature type="compositionally biased region" description="Pro residues" evidence="5">
    <location>
        <begin position="444"/>
        <end position="454"/>
    </location>
</feature>
<feature type="compositionally biased region" description="Acidic residues" evidence="5">
    <location>
        <begin position="505"/>
        <end position="542"/>
    </location>
</feature>
<feature type="modified residue" description="Phosphoserine" evidence="2">
    <location>
        <position position="345"/>
    </location>
</feature>
<feature type="modified residue" description="Phosphothreonine" evidence="2">
    <location>
        <position position="443"/>
    </location>
</feature>
<feature type="cross-link" description="Glycyl lysine isopeptide (Lys-Gly) (interchain with G-Cter in SUMO2)" evidence="2">
    <location>
        <position position="181"/>
    </location>
</feature>
<feature type="cross-link" description="Glycyl lysine isopeptide (Lys-Gly) (interchain with G-Cter in SUMO2)" evidence="2">
    <location>
        <position position="201"/>
    </location>
</feature>
<feature type="splice variant" id="VSP_009133" description="In isoform 2." evidence="7">
    <original>EEEEEEEEDDDDGDDDVIIWD</original>
    <variation>SVWTEGPWSSNSMMF</variation>
    <location>
        <begin position="522"/>
        <end position="542"/>
    </location>
</feature>
<feature type="sequence conflict" description="In Ref. 2; BAC98171." evidence="8" ref="2">
    <original>P</original>
    <variation>L</variation>
    <location>
        <position position="297"/>
    </location>
</feature>
<feature type="sequence conflict" description="In Ref. 2; BAC98171." evidence="8" ref="2">
    <original>K</original>
    <variation>E</variation>
    <location>
        <position position="314"/>
    </location>
</feature>
<feature type="sequence conflict" description="In Ref. 1; AAP32905." evidence="8" ref="1">
    <original>L</original>
    <variation>S</variation>
    <location>
        <position position="389"/>
    </location>
</feature>
<reference key="1">
    <citation type="journal article" date="2003" name="Proc. Natl. Acad. Sci. U.S.A.">
        <title>Homez, a homeobox leucine zipper gene specific to the vertebrate lineage.</title>
        <authorList>
            <person name="Bayarsaihan D."/>
            <person name="Enkhmandakh B."/>
            <person name="Makeyev A."/>
            <person name="Greally J.M."/>
            <person name="Leckman J.F."/>
            <person name="Ruddle F.H."/>
        </authorList>
    </citation>
    <scope>NUCLEOTIDE SEQUENCE [MRNA] (ISOFORMS 1 AND 2)</scope>
    <scope>DEVELOPMENTAL STAGE</scope>
    <scope>TISSUE SPECIFICITY</scope>
    <source>
        <strain>Swiss Webster / NIH</strain>
    </source>
</reference>
<reference key="2">
    <citation type="journal article" date="2003" name="DNA Res.">
        <title>Prediction of the coding sequences of mouse homologues of KIAA gene: III. The complete nucleotide sequences of 500 mouse KIAA-homologous cDNAs identified by screening of terminal sequences of cDNA clones randomly sampled from size-fractionated libraries.</title>
        <authorList>
            <person name="Okazaki N."/>
            <person name="Kikuno R."/>
            <person name="Ohara R."/>
            <person name="Inamoto S."/>
            <person name="Koseki H."/>
            <person name="Hiraoka S."/>
            <person name="Saga Y."/>
            <person name="Nagase T."/>
            <person name="Ohara O."/>
            <person name="Koga H."/>
        </authorList>
    </citation>
    <scope>NUCLEOTIDE SEQUENCE [LARGE SCALE MRNA] (ISOFORM 1)</scope>
    <source>
        <tissue>Embryonic tail</tissue>
    </source>
</reference>
<reference key="3">
    <citation type="journal article" date="2004" name="Genome Res.">
        <title>The status, quality, and expansion of the NIH full-length cDNA project: the Mammalian Gene Collection (MGC).</title>
        <authorList>
            <consortium name="The MGC Project Team"/>
        </authorList>
    </citation>
    <scope>NUCLEOTIDE SEQUENCE [LARGE SCALE MRNA] (ISOFORM 1)</scope>
    <source>
        <strain>C57BL/6J</strain>
        <tissue>Brain</tissue>
    </source>
</reference>
<dbReference type="EMBL" id="AY258064">
    <property type="protein sequence ID" value="AAP32905.1"/>
    <property type="molecule type" value="mRNA"/>
</dbReference>
<dbReference type="EMBL" id="AK129361">
    <property type="protein sequence ID" value="BAC98171.1"/>
    <property type="status" value="ALT_INIT"/>
    <property type="molecule type" value="mRNA"/>
</dbReference>
<dbReference type="EMBL" id="BC094669">
    <property type="protein sequence ID" value="AAH94669.1"/>
    <property type="status" value="ALT_INIT"/>
    <property type="molecule type" value="mRNA"/>
</dbReference>
<dbReference type="RefSeq" id="NP_001171176.1">
    <property type="nucleotide sequence ID" value="NM_001177705.1"/>
</dbReference>
<dbReference type="RefSeq" id="NP_898997.2">
    <property type="nucleotide sequence ID" value="NM_183174.3"/>
</dbReference>
<dbReference type="BMRB" id="Q80W88"/>
<dbReference type="SMR" id="Q80W88"/>
<dbReference type="BioGRID" id="232046">
    <property type="interactions" value="3"/>
</dbReference>
<dbReference type="FunCoup" id="Q80W88">
    <property type="interactions" value="1706"/>
</dbReference>
<dbReference type="IntAct" id="Q80W88">
    <property type="interactions" value="1"/>
</dbReference>
<dbReference type="STRING" id="10090.ENSMUSP00000079929"/>
<dbReference type="GlyGen" id="Q80W88">
    <property type="glycosylation" value="1 site"/>
</dbReference>
<dbReference type="iPTMnet" id="Q80W88"/>
<dbReference type="PhosphoSitePlus" id="Q80W88"/>
<dbReference type="SwissPalm" id="Q80W88"/>
<dbReference type="jPOST" id="Q80W88"/>
<dbReference type="PaxDb" id="10090-ENSMUSP00000079929"/>
<dbReference type="PeptideAtlas" id="Q80W88"/>
<dbReference type="ProteomicsDB" id="273375">
    <molecule id="Q80W88-1"/>
</dbReference>
<dbReference type="ProteomicsDB" id="273376">
    <molecule id="Q80W88-2"/>
</dbReference>
<dbReference type="DNASU" id="239099"/>
<dbReference type="GeneID" id="239099"/>
<dbReference type="KEGG" id="mmu:239099"/>
<dbReference type="UCSC" id="uc007txc.1">
    <molecule id="Q80W88-1"/>
    <property type="organism name" value="mouse"/>
</dbReference>
<dbReference type="AGR" id="MGI:2678023"/>
<dbReference type="CTD" id="57594"/>
<dbReference type="MGI" id="MGI:2678023">
    <property type="gene designation" value="Homez"/>
</dbReference>
<dbReference type="eggNOG" id="KOG3986">
    <property type="taxonomic scope" value="Eukaryota"/>
</dbReference>
<dbReference type="InParanoid" id="Q80W88"/>
<dbReference type="OrthoDB" id="6159439at2759"/>
<dbReference type="PhylomeDB" id="Q80W88"/>
<dbReference type="TreeFam" id="TF333363"/>
<dbReference type="BioGRID-ORCS" id="239099">
    <property type="hits" value="6 hits in 75 CRISPR screens"/>
</dbReference>
<dbReference type="ChiTaRS" id="Homez">
    <property type="organism name" value="mouse"/>
</dbReference>
<dbReference type="PRO" id="PR:Q80W88"/>
<dbReference type="Proteomes" id="UP000000589">
    <property type="component" value="Unplaced"/>
</dbReference>
<dbReference type="RNAct" id="Q80W88">
    <property type="molecule type" value="protein"/>
</dbReference>
<dbReference type="GO" id="GO:0005634">
    <property type="term" value="C:nucleus"/>
    <property type="evidence" value="ECO:0000314"/>
    <property type="project" value="MGI"/>
</dbReference>
<dbReference type="GO" id="GO:0003677">
    <property type="term" value="F:DNA binding"/>
    <property type="evidence" value="ECO:0000314"/>
    <property type="project" value="MGI"/>
</dbReference>
<dbReference type="CDD" id="cd00086">
    <property type="entry name" value="homeodomain"/>
    <property type="match status" value="2"/>
</dbReference>
<dbReference type="FunFam" id="1.10.10.60:FF:000172">
    <property type="entry name" value="Homeobox and leucine zipper protein Homez"/>
    <property type="match status" value="1"/>
</dbReference>
<dbReference type="FunFam" id="1.10.10.60:FF:000211">
    <property type="entry name" value="Homeobox and leucine zipper protein Homez"/>
    <property type="match status" value="1"/>
</dbReference>
<dbReference type="Gene3D" id="1.10.10.60">
    <property type="entry name" value="Homeodomain-like"/>
    <property type="match status" value="3"/>
</dbReference>
<dbReference type="InterPro" id="IPR001356">
    <property type="entry name" value="HD"/>
</dbReference>
<dbReference type="InterPro" id="IPR009057">
    <property type="entry name" value="Homeodomain-like_sf"/>
</dbReference>
<dbReference type="InterPro" id="IPR024578">
    <property type="entry name" value="Homez_homeobox_dom"/>
</dbReference>
<dbReference type="PANTHER" id="PTHR15467:SF7">
    <property type="entry name" value="HOMEOBOX AND LEUCINE ZIPPER PROTEIN HOMEZ"/>
    <property type="match status" value="1"/>
</dbReference>
<dbReference type="PANTHER" id="PTHR15467">
    <property type="entry name" value="ZINC-FINGERS AND HOMEOBOXES RELATED"/>
    <property type="match status" value="1"/>
</dbReference>
<dbReference type="Pfam" id="PF11569">
    <property type="entry name" value="Homez"/>
    <property type="match status" value="1"/>
</dbReference>
<dbReference type="SMART" id="SM00389">
    <property type="entry name" value="HOX"/>
    <property type="match status" value="2"/>
</dbReference>
<dbReference type="SUPFAM" id="SSF46689">
    <property type="entry name" value="Homeodomain-like"/>
    <property type="match status" value="2"/>
</dbReference>
<dbReference type="PROSITE" id="PS50071">
    <property type="entry name" value="HOMEOBOX_2"/>
    <property type="match status" value="1"/>
</dbReference>
<accession>Q80W88</accession>
<accession>Q504Z8</accession>
<proteinExistence type="evidence at protein level"/>
<gene>
    <name type="primary">Homez</name>
    <name type="synonym">Kiaa1443</name>
</gene>
<evidence type="ECO:0000250" key="1"/>
<evidence type="ECO:0000250" key="2">
    <source>
        <dbReference type="UniProtKB" id="Q8IX15"/>
    </source>
</evidence>
<evidence type="ECO:0000255" key="3"/>
<evidence type="ECO:0000255" key="4">
    <source>
        <dbReference type="PROSITE-ProRule" id="PRU00108"/>
    </source>
</evidence>
<evidence type="ECO:0000256" key="5">
    <source>
        <dbReference type="SAM" id="MobiDB-lite"/>
    </source>
</evidence>
<evidence type="ECO:0000269" key="6">
    <source>
    </source>
</evidence>
<evidence type="ECO:0000303" key="7">
    <source>
    </source>
</evidence>
<evidence type="ECO:0000305" key="8"/>
<comment type="function">
    <text>May function as a transcriptional regulator.</text>
</comment>
<comment type="subunit">
    <text evidence="1 8">Homodimer or heterodimer (Potential). Interacts with HOXC8 (By similarity).</text>
</comment>
<comment type="interaction">
    <interactant intactId="EBI-12516872">
        <id>Q80W88</id>
    </interactant>
    <interactant intactId="EBI-372530">
        <id>Q9UHL9</id>
        <label>GTF2IRD1</label>
    </interactant>
    <organismsDiffer>true</organismsDiffer>
    <experiments>2</experiments>
</comment>
<comment type="subcellular location">
    <subcellularLocation>
        <location evidence="4">Nucleus</location>
    </subcellularLocation>
</comment>
<comment type="alternative products">
    <event type="alternative splicing"/>
    <isoform>
        <id>Q80W88-1</id>
        <name>1</name>
        <sequence type="displayed"/>
    </isoform>
    <isoform>
        <id>Q80W88-2</id>
        <name>2</name>
        <sequence type="described" ref="VSP_009133"/>
    </isoform>
</comment>
<comment type="tissue specificity">
    <text evidence="6">Ubiquitous. Strongly expressed in testis.</text>
</comment>
<comment type="developmental stage">
    <text evidence="6">First expressed at 7 dpc. At 8.5-9 dpc expressed in all developing organs. Later on during embryogenesis shows a more restricted expression pattern. At 9.5-12.5 dpc it is strongly expressed in the developing brain, optic vesicle and the otic placode.</text>
</comment>
<comment type="miscellaneous">
    <molecule>Isoform 2</molecule>
    <text evidence="8">May result from the retention of an intron.</text>
</comment>
<comment type="caution">
    <text evidence="8">It is uncertain whether Met-1 or Met-25 is the initiator.</text>
</comment>
<comment type="sequence caution" evidence="8">
    <conflict type="erroneous initiation">
        <sequence resource="EMBL-CDS" id="AAH94669"/>
    </conflict>
    <text>Truncated N-terminus.</text>
</comment>
<comment type="sequence caution" evidence="8">
    <conflict type="erroneous initiation">
        <sequence resource="EMBL-CDS" id="BAC98171"/>
    </conflict>
    <text>Extended N-terminus.</text>
</comment>
<organism>
    <name type="scientific">Mus musculus</name>
    <name type="common">Mouse</name>
    <dbReference type="NCBI Taxonomy" id="10090"/>
    <lineage>
        <taxon>Eukaryota</taxon>
        <taxon>Metazoa</taxon>
        <taxon>Chordata</taxon>
        <taxon>Craniata</taxon>
        <taxon>Vertebrata</taxon>
        <taxon>Euteleostomi</taxon>
        <taxon>Mammalia</taxon>
        <taxon>Eutheria</taxon>
        <taxon>Euarchontoglires</taxon>
        <taxon>Glires</taxon>
        <taxon>Rodentia</taxon>
        <taxon>Myomorpha</taxon>
        <taxon>Muroidea</taxon>
        <taxon>Muridae</taxon>
        <taxon>Murinae</taxon>
        <taxon>Mus</taxon>
        <taxon>Mus</taxon>
    </lineage>
</organism>